<dbReference type="EMBL" id="AM777385">
    <property type="protein sequence ID" value="CAO85987.1"/>
    <property type="molecule type" value="Genomic_DNA"/>
</dbReference>
<dbReference type="RefSeq" id="YP_001531294.1">
    <property type="nucleotide sequence ID" value="NC_009950.1"/>
</dbReference>
<dbReference type="GeneID" id="5696589"/>
<dbReference type="KEGG" id="lper:5696589"/>
<dbReference type="GO" id="GO:0009706">
    <property type="term" value="C:chloroplast inner membrane"/>
    <property type="evidence" value="ECO:0007669"/>
    <property type="project" value="UniProtKB-SubCell"/>
</dbReference>
<dbReference type="GO" id="GO:0015297">
    <property type="term" value="F:antiporter activity"/>
    <property type="evidence" value="ECO:0007669"/>
    <property type="project" value="UniProtKB-KW"/>
</dbReference>
<dbReference type="GO" id="GO:0015078">
    <property type="term" value="F:proton transmembrane transporter activity"/>
    <property type="evidence" value="ECO:0007669"/>
    <property type="project" value="UniProtKB-UniRule"/>
</dbReference>
<dbReference type="GO" id="GO:0006813">
    <property type="term" value="P:potassium ion transport"/>
    <property type="evidence" value="ECO:0007669"/>
    <property type="project" value="UniProtKB-UniRule"/>
</dbReference>
<dbReference type="HAMAP" id="MF_01308">
    <property type="entry name" value="CemA_PxcA"/>
    <property type="match status" value="1"/>
</dbReference>
<dbReference type="InterPro" id="IPR004282">
    <property type="entry name" value="CemA"/>
</dbReference>
<dbReference type="PANTHER" id="PTHR33650:SF2">
    <property type="entry name" value="CHLOROPLAST ENVELOPE MEMBRANE PROTEIN"/>
    <property type="match status" value="1"/>
</dbReference>
<dbReference type="PANTHER" id="PTHR33650">
    <property type="entry name" value="CHLOROPLAST ENVELOPE MEMBRANE PROTEIN-RELATED"/>
    <property type="match status" value="1"/>
</dbReference>
<dbReference type="Pfam" id="PF03040">
    <property type="entry name" value="CemA"/>
    <property type="match status" value="1"/>
</dbReference>
<evidence type="ECO:0000255" key="1">
    <source>
        <dbReference type="HAMAP-Rule" id="MF_01308"/>
    </source>
</evidence>
<evidence type="ECO:0000305" key="2"/>
<proteinExistence type="inferred from homology"/>
<gene>
    <name evidence="1" type="primary">cemA</name>
    <name type="ordered locus">LopeCp051</name>
</gene>
<keyword id="KW-0050">Antiport</keyword>
<keyword id="KW-0150">Chloroplast</keyword>
<keyword id="KW-0375">Hydrogen ion transport</keyword>
<keyword id="KW-0406">Ion transport</keyword>
<keyword id="KW-0472">Membrane</keyword>
<keyword id="KW-0934">Plastid</keyword>
<keyword id="KW-1001">Plastid inner membrane</keyword>
<keyword id="KW-0630">Potassium</keyword>
<keyword id="KW-0633">Potassium transport</keyword>
<keyword id="KW-0812">Transmembrane</keyword>
<keyword id="KW-1133">Transmembrane helix</keyword>
<keyword id="KW-0813">Transport</keyword>
<feature type="chain" id="PRO_0000323247" description="Potassium/proton antiporter CemA">
    <location>
        <begin position="1"/>
        <end position="230"/>
    </location>
</feature>
<feature type="transmembrane region" description="Helical" evidence="1">
    <location>
        <begin position="7"/>
        <end position="27"/>
    </location>
</feature>
<feature type="transmembrane region" description="Helical" evidence="1">
    <location>
        <begin position="106"/>
        <end position="126"/>
    </location>
</feature>
<feature type="transmembrane region" description="Helical" evidence="1">
    <location>
        <begin position="145"/>
        <end position="165"/>
    </location>
</feature>
<feature type="transmembrane region" description="Helical" evidence="1">
    <location>
        <begin position="181"/>
        <end position="201"/>
    </location>
</feature>
<comment type="function">
    <text evidence="1">Contributes to K(+)/H(+) antiport activity by supporting proton efflux to control proton extrusion and homeostasis in chloroplasts in a light-dependent manner to modulate photosynthesis. Prevents excessive induction of non-photochemical quenching (NPQ) under continuous-light conditions. Indirectly promotes efficient inorganic carbon uptake into chloroplasts.</text>
</comment>
<comment type="catalytic activity">
    <reaction evidence="1">
        <text>K(+)(in) + H(+)(out) = K(+)(out) + H(+)(in)</text>
        <dbReference type="Rhea" id="RHEA:29467"/>
        <dbReference type="ChEBI" id="CHEBI:15378"/>
        <dbReference type="ChEBI" id="CHEBI:29103"/>
    </reaction>
</comment>
<comment type="subcellular location">
    <subcellularLocation>
        <location evidence="1">Plastid</location>
        <location evidence="1">Chloroplast inner membrane</location>
        <topology evidence="1">Multi-pass membrane protein</topology>
    </subcellularLocation>
</comment>
<comment type="similarity">
    <text evidence="1 2">Belongs to the CemA family.</text>
</comment>
<reference key="1">
    <citation type="journal article" date="2008" name="PLoS ONE">
        <title>An optimized chloroplast DNA extraction protocol for grasses (Poaceae) proves suitable for whole plastid genome sequencing and SNP detection.</title>
        <authorList>
            <person name="Diekmann K."/>
            <person name="Hodkinson T.R."/>
            <person name="Fricke E."/>
            <person name="Barth S."/>
        </authorList>
    </citation>
    <scope>NUCLEOTIDE SEQUENCE [LARGE SCALE GENOMIC DNA]</scope>
    <source>
        <strain>cv. Cashel</strain>
    </source>
</reference>
<accession>A8Y9I1</accession>
<organism>
    <name type="scientific">Lolium perenne</name>
    <name type="common">Perennial ryegrass</name>
    <dbReference type="NCBI Taxonomy" id="4522"/>
    <lineage>
        <taxon>Eukaryota</taxon>
        <taxon>Viridiplantae</taxon>
        <taxon>Streptophyta</taxon>
        <taxon>Embryophyta</taxon>
        <taxon>Tracheophyta</taxon>
        <taxon>Spermatophyta</taxon>
        <taxon>Magnoliopsida</taxon>
        <taxon>Liliopsida</taxon>
        <taxon>Poales</taxon>
        <taxon>Poaceae</taxon>
        <taxon>BOP clade</taxon>
        <taxon>Pooideae</taxon>
        <taxon>Poodae</taxon>
        <taxon>Poeae</taxon>
        <taxon>Poeae Chloroplast Group 2 (Poeae type)</taxon>
        <taxon>Loliodinae</taxon>
        <taxon>Loliinae</taxon>
        <taxon>Lolium</taxon>
    </lineage>
</organism>
<geneLocation type="chloroplast"/>
<sequence>MKKKKALPSLLYLVFIVLLPWGVSFSFNKCLELWIKNWWNTRQSETLLPYIQEKRILERFIELEELSLLDEMIKEKLKTHAQKPPIGIHKEIIQLVKMDNEDHLHIILHFSTNIICLAILSGFFFLSKEELVILNSWVQEFFYNLNDSIKAFFILLVTDFFVGFHSTRGWELVIRWVYNDLGWAPNELIFTIFVCSFPVILDTCLKFWVFFCLNRLSPSLVVIYHSISEA</sequence>
<name>CEMA_LOLPR</name>
<protein>
    <recommendedName>
        <fullName evidence="1">Potassium/proton antiporter CemA</fullName>
    </recommendedName>
    <alternativeName>
        <fullName evidence="1">Chloroplast envelope membrane protein A</fullName>
        <shortName evidence="1">CemA</shortName>
    </alternativeName>
</protein>